<dbReference type="EC" id="2.7.4.25" evidence="1"/>
<dbReference type="EMBL" id="AE017285">
    <property type="protein sequence ID" value="AAS95508.1"/>
    <property type="molecule type" value="Genomic_DNA"/>
</dbReference>
<dbReference type="RefSeq" id="WP_010938327.1">
    <property type="nucleotide sequence ID" value="NC_002937.3"/>
</dbReference>
<dbReference type="RefSeq" id="YP_010249.1">
    <property type="nucleotide sequence ID" value="NC_002937.3"/>
</dbReference>
<dbReference type="SMR" id="Q72DA1"/>
<dbReference type="IntAct" id="Q72DA1">
    <property type="interactions" value="2"/>
</dbReference>
<dbReference type="STRING" id="882.DVU_1028"/>
<dbReference type="PaxDb" id="882-DVU_1028"/>
<dbReference type="EnsemblBacteria" id="AAS95508">
    <property type="protein sequence ID" value="AAS95508"/>
    <property type="gene ID" value="DVU_1028"/>
</dbReference>
<dbReference type="KEGG" id="dvu:DVU_1028"/>
<dbReference type="PATRIC" id="fig|882.5.peg.966"/>
<dbReference type="eggNOG" id="COG0283">
    <property type="taxonomic scope" value="Bacteria"/>
</dbReference>
<dbReference type="HOGENOM" id="CLU_079959_0_0_7"/>
<dbReference type="OrthoDB" id="9807434at2"/>
<dbReference type="PhylomeDB" id="Q72DA1"/>
<dbReference type="Proteomes" id="UP000002194">
    <property type="component" value="Chromosome"/>
</dbReference>
<dbReference type="GO" id="GO:0005829">
    <property type="term" value="C:cytosol"/>
    <property type="evidence" value="ECO:0007669"/>
    <property type="project" value="TreeGrafter"/>
</dbReference>
<dbReference type="GO" id="GO:0005524">
    <property type="term" value="F:ATP binding"/>
    <property type="evidence" value="ECO:0007669"/>
    <property type="project" value="UniProtKB-UniRule"/>
</dbReference>
<dbReference type="GO" id="GO:0036430">
    <property type="term" value="F:CMP kinase activity"/>
    <property type="evidence" value="ECO:0007669"/>
    <property type="project" value="RHEA"/>
</dbReference>
<dbReference type="GO" id="GO:0036431">
    <property type="term" value="F:dCMP kinase activity"/>
    <property type="evidence" value="ECO:0007669"/>
    <property type="project" value="RHEA"/>
</dbReference>
<dbReference type="GO" id="GO:0015949">
    <property type="term" value="P:nucleobase-containing small molecule interconversion"/>
    <property type="evidence" value="ECO:0007669"/>
    <property type="project" value="TreeGrafter"/>
</dbReference>
<dbReference type="GO" id="GO:0006220">
    <property type="term" value="P:pyrimidine nucleotide metabolic process"/>
    <property type="evidence" value="ECO:0007669"/>
    <property type="project" value="UniProtKB-UniRule"/>
</dbReference>
<dbReference type="CDD" id="cd02020">
    <property type="entry name" value="CMPK"/>
    <property type="match status" value="1"/>
</dbReference>
<dbReference type="Gene3D" id="3.40.50.300">
    <property type="entry name" value="P-loop containing nucleotide triphosphate hydrolases"/>
    <property type="match status" value="1"/>
</dbReference>
<dbReference type="HAMAP" id="MF_00238">
    <property type="entry name" value="Cytidyl_kinase_type1"/>
    <property type="match status" value="1"/>
</dbReference>
<dbReference type="InterPro" id="IPR003136">
    <property type="entry name" value="Cytidylate_kin"/>
</dbReference>
<dbReference type="InterPro" id="IPR011994">
    <property type="entry name" value="Cytidylate_kinase_dom"/>
</dbReference>
<dbReference type="InterPro" id="IPR027417">
    <property type="entry name" value="P-loop_NTPase"/>
</dbReference>
<dbReference type="NCBIfam" id="TIGR00017">
    <property type="entry name" value="cmk"/>
    <property type="match status" value="1"/>
</dbReference>
<dbReference type="PANTHER" id="PTHR21299:SF2">
    <property type="entry name" value="CYTIDYLATE KINASE"/>
    <property type="match status" value="1"/>
</dbReference>
<dbReference type="PANTHER" id="PTHR21299">
    <property type="entry name" value="CYTIDYLATE KINASE/PANTOATE-BETA-ALANINE LIGASE"/>
    <property type="match status" value="1"/>
</dbReference>
<dbReference type="Pfam" id="PF02224">
    <property type="entry name" value="Cytidylate_kin"/>
    <property type="match status" value="1"/>
</dbReference>
<dbReference type="SUPFAM" id="SSF52540">
    <property type="entry name" value="P-loop containing nucleoside triphosphate hydrolases"/>
    <property type="match status" value="1"/>
</dbReference>
<proteinExistence type="inferred from homology"/>
<sequence>MPDTTGGHPAALKVVTLDGPAGVGKTTLARRVADALGIPYLDTGAMFRTMAWRLGPDGPDLDEALLRDRLAGFVFTLRGRGGASVLSCNGEDIGNEIRTEEVGAMASRIAALPVVRECLKAAQQRMGAAQPLVVEGRDMGTVVFPGARHKFFLDAAPEIRAMRRYTQLQTMGEAHDLALLTEQIRSRDEQDRNRAVAPLRPAADAIIVDTGDLDIDGVFGVIMQHIRSRDGL</sequence>
<comment type="catalytic activity">
    <reaction evidence="1">
        <text>CMP + ATP = CDP + ADP</text>
        <dbReference type="Rhea" id="RHEA:11600"/>
        <dbReference type="ChEBI" id="CHEBI:30616"/>
        <dbReference type="ChEBI" id="CHEBI:58069"/>
        <dbReference type="ChEBI" id="CHEBI:60377"/>
        <dbReference type="ChEBI" id="CHEBI:456216"/>
        <dbReference type="EC" id="2.7.4.25"/>
    </reaction>
</comment>
<comment type="catalytic activity">
    <reaction evidence="1">
        <text>dCMP + ATP = dCDP + ADP</text>
        <dbReference type="Rhea" id="RHEA:25094"/>
        <dbReference type="ChEBI" id="CHEBI:30616"/>
        <dbReference type="ChEBI" id="CHEBI:57566"/>
        <dbReference type="ChEBI" id="CHEBI:58593"/>
        <dbReference type="ChEBI" id="CHEBI:456216"/>
        <dbReference type="EC" id="2.7.4.25"/>
    </reaction>
</comment>
<comment type="subcellular location">
    <subcellularLocation>
        <location evidence="1">Cytoplasm</location>
    </subcellularLocation>
</comment>
<comment type="similarity">
    <text evidence="1">Belongs to the cytidylate kinase family. Type 1 subfamily.</text>
</comment>
<protein>
    <recommendedName>
        <fullName evidence="1">Cytidylate kinase</fullName>
        <shortName evidence="1">CK</shortName>
        <ecNumber evidence="1">2.7.4.25</ecNumber>
    </recommendedName>
    <alternativeName>
        <fullName evidence="1">Cytidine monophosphate kinase</fullName>
        <shortName evidence="1">CMP kinase</shortName>
    </alternativeName>
</protein>
<keyword id="KW-0067">ATP-binding</keyword>
<keyword id="KW-0963">Cytoplasm</keyword>
<keyword id="KW-0418">Kinase</keyword>
<keyword id="KW-0547">Nucleotide-binding</keyword>
<keyword id="KW-1185">Reference proteome</keyword>
<keyword id="KW-0808">Transferase</keyword>
<reference key="1">
    <citation type="journal article" date="2004" name="Nat. Biotechnol.">
        <title>The genome sequence of the anaerobic, sulfate-reducing bacterium Desulfovibrio vulgaris Hildenborough.</title>
        <authorList>
            <person name="Heidelberg J.F."/>
            <person name="Seshadri R."/>
            <person name="Haveman S.A."/>
            <person name="Hemme C.L."/>
            <person name="Paulsen I.T."/>
            <person name="Kolonay J.F."/>
            <person name="Eisen J.A."/>
            <person name="Ward N.L."/>
            <person name="Methe B.A."/>
            <person name="Brinkac L.M."/>
            <person name="Daugherty S.C."/>
            <person name="DeBoy R.T."/>
            <person name="Dodson R.J."/>
            <person name="Durkin A.S."/>
            <person name="Madupu R."/>
            <person name="Nelson W.C."/>
            <person name="Sullivan S.A."/>
            <person name="Fouts D.E."/>
            <person name="Haft D.H."/>
            <person name="Selengut J."/>
            <person name="Peterson J.D."/>
            <person name="Davidsen T.M."/>
            <person name="Zafar N."/>
            <person name="Zhou L."/>
            <person name="Radune D."/>
            <person name="Dimitrov G."/>
            <person name="Hance M."/>
            <person name="Tran K."/>
            <person name="Khouri H.M."/>
            <person name="Gill J."/>
            <person name="Utterback T.R."/>
            <person name="Feldblyum T.V."/>
            <person name="Wall J.D."/>
            <person name="Voordouw G."/>
            <person name="Fraser C.M."/>
        </authorList>
    </citation>
    <scope>NUCLEOTIDE SEQUENCE [LARGE SCALE GENOMIC DNA]</scope>
    <source>
        <strain>ATCC 29579 / DSM 644 / CCUG 34227 / NCIMB 8303 / VKM B-1760 / Hildenborough</strain>
    </source>
</reference>
<feature type="chain" id="PRO_0000131912" description="Cytidylate kinase">
    <location>
        <begin position="1"/>
        <end position="232"/>
    </location>
</feature>
<feature type="binding site" evidence="1">
    <location>
        <begin position="19"/>
        <end position="27"/>
    </location>
    <ligand>
        <name>ATP</name>
        <dbReference type="ChEBI" id="CHEBI:30616"/>
    </ligand>
</feature>
<gene>
    <name evidence="1" type="primary">cmk</name>
    <name type="ordered locus">DVU_1028</name>
</gene>
<accession>Q72DA1</accession>
<name>KCY_NITV2</name>
<evidence type="ECO:0000255" key="1">
    <source>
        <dbReference type="HAMAP-Rule" id="MF_00238"/>
    </source>
</evidence>
<organism>
    <name type="scientific">Nitratidesulfovibrio vulgaris (strain ATCC 29579 / DSM 644 / CCUG 34227 / NCIMB 8303 / VKM B-1760 / Hildenborough)</name>
    <name type="common">Desulfovibrio vulgaris</name>
    <dbReference type="NCBI Taxonomy" id="882"/>
    <lineage>
        <taxon>Bacteria</taxon>
        <taxon>Pseudomonadati</taxon>
        <taxon>Thermodesulfobacteriota</taxon>
        <taxon>Desulfovibrionia</taxon>
        <taxon>Desulfovibrionales</taxon>
        <taxon>Desulfovibrionaceae</taxon>
        <taxon>Nitratidesulfovibrio</taxon>
    </lineage>
</organism>